<geneLocation type="plasmid">
    <name>pWP113a</name>
</geneLocation>
<evidence type="ECO:0000305" key="1"/>
<sequence>MHTQKAITEALQKLGVQSGDLLMVHASLKSIGPVEGGAETVVAALRSAVGPTGTVMGYASWDRSPYEETLNGARLDDNARRTWPPFDPATAGTYRGFGLLNQFLVQAPGARRSAHPDASMVAVGPLAETLTEPHELGHALGEGSPNERFVRLGGKALLLGAPLNSVTALHYAEAVADIPNKRWVTYEMPMPGRDGEVAWKTASDYDSNGILDCFAIEGKQDAVETIANAYVKLGRHREGVVGFAQCYLFDAQDIVTFGVTYLEKHFGTTPIVPAHEAIERSCEPSG</sequence>
<name>AAC31_SALSP</name>
<accession>P13246</accession>
<comment type="function">
    <text>Resistance to antibiotics containing the 2-deoxy-streptamine ring including gentamicin, kanamycin, tobramycin, neomycin and apramycin.</text>
</comment>
<comment type="catalytic activity">
    <reaction>
        <text>a 2-deoxystreptamine antibiotic + acetyl-CoA = an N(3)-acetyl-2-deoxystreptamine antibiotic + CoA + H(+)</text>
        <dbReference type="Rhea" id="RHEA:12665"/>
        <dbReference type="ChEBI" id="CHEBI:15378"/>
        <dbReference type="ChEBI" id="CHEBI:57287"/>
        <dbReference type="ChEBI" id="CHEBI:57288"/>
        <dbReference type="ChEBI" id="CHEBI:57921"/>
        <dbReference type="ChEBI" id="CHEBI:77452"/>
        <dbReference type="EC" id="2.3.1.81"/>
    </reaction>
</comment>
<comment type="similarity">
    <text evidence="1">Belongs to the antibiotic N-acetyltransferase family.</text>
</comment>
<feature type="chain" id="PRO_0000068543" description="Aminoglycoside N(3)-acetyltransferase III">
    <location>
        <begin position="1"/>
        <end position="286"/>
    </location>
</feature>
<reference key="1">
    <citation type="journal article" date="1985" name="Mol. Gen. Genet.">
        <title>Genes for gentamicin-(3)-N-acetyl-transferases III and IV. II. Nucleotide sequences of three AAC(3)-III genes and evolutionary aspects.</title>
        <authorList>
            <person name="Allmansberger R."/>
            <person name="Braeu B."/>
            <person name="Piepersberg W."/>
        </authorList>
    </citation>
    <scope>NUCLEOTIDE SEQUENCE [GENOMIC DNA]</scope>
</reference>
<gene>
    <name type="primary">aacC3</name>
</gene>
<proteinExistence type="inferred from homology"/>
<protein>
    <recommendedName>
        <fullName>Aminoglycoside N(3)-acetyltransferase III</fullName>
        <ecNumber>2.3.1.81</ecNumber>
    </recommendedName>
    <alternativeName>
        <fullName>ACC(3)-III</fullName>
    </alternativeName>
    <alternativeName>
        <fullName>Aminocyclitol 3-N-acetyltransferase type III</fullName>
    </alternativeName>
    <alternativeName>
        <fullName>Gentamicin-(3)-N-acetyl-transferase</fullName>
    </alternativeName>
</protein>
<keyword id="KW-0012">Acyltransferase</keyword>
<keyword id="KW-0046">Antibiotic resistance</keyword>
<keyword id="KW-0614">Plasmid</keyword>
<keyword id="KW-0808">Transferase</keyword>
<organism>
    <name type="scientific">Salmonella sp</name>
    <dbReference type="NCBI Taxonomy" id="599"/>
    <lineage>
        <taxon>Bacteria</taxon>
        <taxon>Pseudomonadati</taxon>
        <taxon>Pseudomonadota</taxon>
        <taxon>Gammaproteobacteria</taxon>
        <taxon>Enterobacterales</taxon>
        <taxon>Enterobacteriaceae</taxon>
        <taxon>Salmonella</taxon>
    </lineage>
</organism>
<dbReference type="EC" id="2.3.1.81"/>
<dbReference type="EMBL" id="X13543">
    <property type="protein sequence ID" value="CAA31895.1"/>
    <property type="molecule type" value="Genomic_DNA"/>
</dbReference>
<dbReference type="SMR" id="P13246"/>
<dbReference type="CARD" id="ARO:3002533">
    <property type="molecule name" value="AAC(3)-IIa"/>
    <property type="mechanism identifier" value="ARO:0001004"/>
    <property type="mechanism name" value="antibiotic inactivation"/>
</dbReference>
<dbReference type="GO" id="GO:0046353">
    <property type="term" value="F:aminoglycoside 3-N-acetyltransferase activity"/>
    <property type="evidence" value="ECO:0007669"/>
    <property type="project" value="UniProtKB-EC"/>
</dbReference>
<dbReference type="GO" id="GO:0046677">
    <property type="term" value="P:response to antibiotic"/>
    <property type="evidence" value="ECO:0007669"/>
    <property type="project" value="UniProtKB-KW"/>
</dbReference>
<dbReference type="InterPro" id="IPR003679">
    <property type="entry name" value="Amioglycoside_AcTrfase"/>
</dbReference>
<dbReference type="InterPro" id="IPR028345">
    <property type="entry name" value="Antibiotic_NAT-like"/>
</dbReference>
<dbReference type="NCBIfam" id="NF033082">
    <property type="entry name" value="AAC_3"/>
    <property type="match status" value="1"/>
</dbReference>
<dbReference type="NCBIfam" id="NF033080">
    <property type="entry name" value="AAC_3_II"/>
    <property type="match status" value="1"/>
</dbReference>
<dbReference type="PANTHER" id="PTHR11104">
    <property type="entry name" value="AMINOGLYCOSIDE N3-ACETYLTRANSFERASE"/>
    <property type="match status" value="1"/>
</dbReference>
<dbReference type="PANTHER" id="PTHR11104:SF0">
    <property type="entry name" value="SPBETA PROPHAGE-DERIVED AMINOGLYCOSIDE N(3')-ACETYLTRANSFERASE-LIKE PROTEIN YOKD"/>
    <property type="match status" value="1"/>
</dbReference>
<dbReference type="Pfam" id="PF02522">
    <property type="entry name" value="Antibiotic_NAT"/>
    <property type="match status" value="1"/>
</dbReference>
<dbReference type="SUPFAM" id="SSF110710">
    <property type="entry name" value="TTHA0583/YokD-like"/>
    <property type="match status" value="1"/>
</dbReference>